<organism>
    <name type="scientific">Salmonella dublin (strain CT_02021853)</name>
    <dbReference type="NCBI Taxonomy" id="439851"/>
    <lineage>
        <taxon>Bacteria</taxon>
        <taxon>Pseudomonadati</taxon>
        <taxon>Pseudomonadota</taxon>
        <taxon>Gammaproteobacteria</taxon>
        <taxon>Enterobacterales</taxon>
        <taxon>Enterobacteriaceae</taxon>
        <taxon>Salmonella</taxon>
    </lineage>
</organism>
<protein>
    <recommendedName>
        <fullName evidence="1">Phosphoenolpyruvate synthase regulatory protein</fullName>
        <shortName evidence="1">PEP synthase regulatory protein</shortName>
        <shortName evidence="1">PSRP</shortName>
        <ecNumber evidence="1">2.7.11.33</ecNumber>
        <ecNumber evidence="1">2.7.4.28</ecNumber>
    </recommendedName>
    <alternativeName>
        <fullName evidence="1">Pyruvate, water dikinase regulatory protein</fullName>
    </alternativeName>
</protein>
<comment type="function">
    <text evidence="1">Bifunctional serine/threonine kinase and phosphorylase involved in the regulation of the phosphoenolpyruvate synthase (PEPS) by catalyzing its phosphorylation/dephosphorylation.</text>
</comment>
<comment type="catalytic activity">
    <reaction evidence="1">
        <text>[pyruvate, water dikinase] + ADP = [pyruvate, water dikinase]-phosphate + AMP + H(+)</text>
        <dbReference type="Rhea" id="RHEA:46020"/>
        <dbReference type="Rhea" id="RHEA-COMP:11425"/>
        <dbReference type="Rhea" id="RHEA-COMP:11426"/>
        <dbReference type="ChEBI" id="CHEBI:15378"/>
        <dbReference type="ChEBI" id="CHEBI:43176"/>
        <dbReference type="ChEBI" id="CHEBI:68546"/>
        <dbReference type="ChEBI" id="CHEBI:456215"/>
        <dbReference type="ChEBI" id="CHEBI:456216"/>
        <dbReference type="EC" id="2.7.11.33"/>
    </reaction>
</comment>
<comment type="catalytic activity">
    <reaction evidence="1">
        <text>[pyruvate, water dikinase]-phosphate + phosphate + H(+) = [pyruvate, water dikinase] + diphosphate</text>
        <dbReference type="Rhea" id="RHEA:48580"/>
        <dbReference type="Rhea" id="RHEA-COMP:11425"/>
        <dbReference type="Rhea" id="RHEA-COMP:11426"/>
        <dbReference type="ChEBI" id="CHEBI:15378"/>
        <dbReference type="ChEBI" id="CHEBI:33019"/>
        <dbReference type="ChEBI" id="CHEBI:43176"/>
        <dbReference type="ChEBI" id="CHEBI:43474"/>
        <dbReference type="ChEBI" id="CHEBI:68546"/>
        <dbReference type="EC" id="2.7.4.28"/>
    </reaction>
</comment>
<comment type="similarity">
    <text evidence="1">Belongs to the pyruvate, phosphate/water dikinase regulatory protein family. PSRP subfamily.</text>
</comment>
<sequence length="277" mass="31149">MDNVVDRHVFYISDGTAITAEVLGHAVMSQFPVTISSITLPFVENESRARAVKDQIDAIYQQTGVRPLVFYSIVLPEIRAIILQSEGFCQDIVQALVAPLQQEMKLDPTPIAHRTHGLNPGNLNKYDARIAAIDYTLAHDDGISLRNLDQAQVILLGVSRCGKTPTSLYLAMQFGIRAANYPFIADDMDNLTLPTSLKPLQHKLFGLTIDPERLAAIREERRENSRYASLRQCRMEVAEVEALYRKNQIPCLNSTNYSVEEIATKILDIMGLNRRMY</sequence>
<accession>B5FJ93</accession>
<keyword id="KW-0418">Kinase</keyword>
<keyword id="KW-0547">Nucleotide-binding</keyword>
<keyword id="KW-0723">Serine/threonine-protein kinase</keyword>
<keyword id="KW-0808">Transferase</keyword>
<dbReference type="EC" id="2.7.11.33" evidence="1"/>
<dbReference type="EC" id="2.7.4.28" evidence="1"/>
<dbReference type="EMBL" id="CP001144">
    <property type="protein sequence ID" value="ACH73613.1"/>
    <property type="molecule type" value="Genomic_DNA"/>
</dbReference>
<dbReference type="RefSeq" id="WP_000370992.1">
    <property type="nucleotide sequence ID" value="NC_011205.1"/>
</dbReference>
<dbReference type="SMR" id="B5FJ93"/>
<dbReference type="KEGG" id="sed:SeD_A1997"/>
<dbReference type="HOGENOM" id="CLU_046206_1_0_6"/>
<dbReference type="Proteomes" id="UP000008322">
    <property type="component" value="Chromosome"/>
</dbReference>
<dbReference type="GO" id="GO:0043531">
    <property type="term" value="F:ADP binding"/>
    <property type="evidence" value="ECO:0007669"/>
    <property type="project" value="UniProtKB-UniRule"/>
</dbReference>
<dbReference type="GO" id="GO:0005524">
    <property type="term" value="F:ATP binding"/>
    <property type="evidence" value="ECO:0007669"/>
    <property type="project" value="InterPro"/>
</dbReference>
<dbReference type="GO" id="GO:0016776">
    <property type="term" value="F:phosphotransferase activity, phosphate group as acceptor"/>
    <property type="evidence" value="ECO:0007669"/>
    <property type="project" value="UniProtKB-UniRule"/>
</dbReference>
<dbReference type="GO" id="GO:0004674">
    <property type="term" value="F:protein serine/threonine kinase activity"/>
    <property type="evidence" value="ECO:0007669"/>
    <property type="project" value="UniProtKB-UniRule"/>
</dbReference>
<dbReference type="HAMAP" id="MF_01062">
    <property type="entry name" value="PSRP"/>
    <property type="match status" value="1"/>
</dbReference>
<dbReference type="InterPro" id="IPR005177">
    <property type="entry name" value="Kinase-pyrophosphorylase"/>
</dbReference>
<dbReference type="InterPro" id="IPR026530">
    <property type="entry name" value="PSRP"/>
</dbReference>
<dbReference type="NCBIfam" id="NF003742">
    <property type="entry name" value="PRK05339.1"/>
    <property type="match status" value="1"/>
</dbReference>
<dbReference type="PANTHER" id="PTHR31756">
    <property type="entry name" value="PYRUVATE, PHOSPHATE DIKINASE REGULATORY PROTEIN 1, CHLOROPLASTIC"/>
    <property type="match status" value="1"/>
</dbReference>
<dbReference type="PANTHER" id="PTHR31756:SF3">
    <property type="entry name" value="PYRUVATE, PHOSPHATE DIKINASE REGULATORY PROTEIN 1, CHLOROPLASTIC"/>
    <property type="match status" value="1"/>
</dbReference>
<dbReference type="Pfam" id="PF03618">
    <property type="entry name" value="Kinase-PPPase"/>
    <property type="match status" value="1"/>
</dbReference>
<gene>
    <name evidence="1" type="primary">ppsR</name>
    <name type="ordered locus">SeD_A1997</name>
</gene>
<proteinExistence type="inferred from homology"/>
<reference key="1">
    <citation type="journal article" date="2011" name="J. Bacteriol.">
        <title>Comparative genomics of 28 Salmonella enterica isolates: evidence for CRISPR-mediated adaptive sublineage evolution.</title>
        <authorList>
            <person name="Fricke W.F."/>
            <person name="Mammel M.K."/>
            <person name="McDermott P.F."/>
            <person name="Tartera C."/>
            <person name="White D.G."/>
            <person name="Leclerc J.E."/>
            <person name="Ravel J."/>
            <person name="Cebula T.A."/>
        </authorList>
    </citation>
    <scope>NUCLEOTIDE SEQUENCE [LARGE SCALE GENOMIC DNA]</scope>
    <source>
        <strain>CT_02021853</strain>
    </source>
</reference>
<feature type="chain" id="PRO_1000136489" description="Phosphoenolpyruvate synthase regulatory protein">
    <location>
        <begin position="1"/>
        <end position="277"/>
    </location>
</feature>
<feature type="binding site" evidence="1">
    <location>
        <begin position="157"/>
        <end position="164"/>
    </location>
    <ligand>
        <name>ADP</name>
        <dbReference type="ChEBI" id="CHEBI:456216"/>
    </ligand>
</feature>
<name>PSRP_SALDC</name>
<evidence type="ECO:0000255" key="1">
    <source>
        <dbReference type="HAMAP-Rule" id="MF_01062"/>
    </source>
</evidence>